<sequence>MGRKWNNIKDKKASKDANTSRIYAKFGREIYVAAKQGEPDPESNQALRVVLERAKTYNVPRTIIDRAVEKAKGGSEENYDELRYEGFGPNGAMVIVDTLTNNVNRTAADVRAAFSKNGGNMGVNGSVAYMFDATAVIGLEGKTSDEVLEILMEADVDVRDILEEEDAVIVYAEPDQFHAVQSALKDAGVEEFTVAELTMLAQNDVTLPEDAQAQFEKMVDALEDLEDVQQVYHNVDLGE</sequence>
<keyword id="KW-0963">Cytoplasm</keyword>
<keyword id="KW-0238">DNA-binding</keyword>
<keyword id="KW-0804">Transcription</keyword>
<keyword id="KW-0805">Transcription regulation</keyword>
<evidence type="ECO:0000255" key="1">
    <source>
        <dbReference type="HAMAP-Rule" id="MF_00918"/>
    </source>
</evidence>
<comment type="subcellular location">
    <subcellularLocation>
        <location evidence="1">Cytoplasm</location>
    </subcellularLocation>
</comment>
<comment type="similarity">
    <text evidence="1">Belongs to the TACO1 family. YeeN subfamily.</text>
</comment>
<name>Y615_BACC7</name>
<gene>
    <name type="ordered locus">BCAH187_A0615</name>
</gene>
<reference key="1">
    <citation type="submission" date="2008-10" db="EMBL/GenBank/DDBJ databases">
        <title>Genome sequence of Bacillus cereus AH187.</title>
        <authorList>
            <person name="Dodson R.J."/>
            <person name="Durkin A.S."/>
            <person name="Rosovitz M.J."/>
            <person name="Rasko D.A."/>
            <person name="Kolsto A.B."/>
            <person name="Okstad O.A."/>
            <person name="Ravel J."/>
            <person name="Sutton G."/>
        </authorList>
    </citation>
    <scope>NUCLEOTIDE SEQUENCE [LARGE SCALE GENOMIC DNA]</scope>
    <source>
        <strain>AH187</strain>
    </source>
</reference>
<accession>B7HU74</accession>
<organism>
    <name type="scientific">Bacillus cereus (strain AH187)</name>
    <dbReference type="NCBI Taxonomy" id="405534"/>
    <lineage>
        <taxon>Bacteria</taxon>
        <taxon>Bacillati</taxon>
        <taxon>Bacillota</taxon>
        <taxon>Bacilli</taxon>
        <taxon>Bacillales</taxon>
        <taxon>Bacillaceae</taxon>
        <taxon>Bacillus</taxon>
        <taxon>Bacillus cereus group</taxon>
    </lineage>
</organism>
<proteinExistence type="inferred from homology"/>
<feature type="chain" id="PRO_1000132154" description="Probable transcriptional regulatory protein BCAH187_A0615">
    <location>
        <begin position="1"/>
        <end position="239"/>
    </location>
</feature>
<dbReference type="EMBL" id="CP001177">
    <property type="protein sequence ID" value="ACJ80760.1"/>
    <property type="molecule type" value="Genomic_DNA"/>
</dbReference>
<dbReference type="SMR" id="B7HU74"/>
<dbReference type="KEGG" id="bcr:BCAH187_A0615"/>
<dbReference type="HOGENOM" id="CLU_062974_2_0_9"/>
<dbReference type="Proteomes" id="UP000002214">
    <property type="component" value="Chromosome"/>
</dbReference>
<dbReference type="GO" id="GO:0005829">
    <property type="term" value="C:cytosol"/>
    <property type="evidence" value="ECO:0007669"/>
    <property type="project" value="TreeGrafter"/>
</dbReference>
<dbReference type="GO" id="GO:0003677">
    <property type="term" value="F:DNA binding"/>
    <property type="evidence" value="ECO:0007669"/>
    <property type="project" value="UniProtKB-UniRule"/>
</dbReference>
<dbReference type="GO" id="GO:0006355">
    <property type="term" value="P:regulation of DNA-templated transcription"/>
    <property type="evidence" value="ECO:0007669"/>
    <property type="project" value="UniProtKB-UniRule"/>
</dbReference>
<dbReference type="FunFam" id="1.10.10.200:FF:000003">
    <property type="entry name" value="Probable transcriptional regulatory protein YeeN"/>
    <property type="match status" value="1"/>
</dbReference>
<dbReference type="FunFam" id="3.30.70.980:FF:000004">
    <property type="entry name" value="Probable transcriptional regulatory protein YeeN"/>
    <property type="match status" value="1"/>
</dbReference>
<dbReference type="Gene3D" id="1.10.10.200">
    <property type="match status" value="1"/>
</dbReference>
<dbReference type="Gene3D" id="3.30.70.980">
    <property type="match status" value="2"/>
</dbReference>
<dbReference type="HAMAP" id="MF_00693">
    <property type="entry name" value="Transcrip_reg_TACO1"/>
    <property type="match status" value="1"/>
</dbReference>
<dbReference type="HAMAP" id="MF_00918">
    <property type="entry name" value="Transcrip_reg_TACO1_YeeN"/>
    <property type="match status" value="1"/>
</dbReference>
<dbReference type="InterPro" id="IPR017856">
    <property type="entry name" value="Integrase-like_N"/>
</dbReference>
<dbReference type="InterPro" id="IPR048300">
    <property type="entry name" value="TACO1_YebC-like_2nd/3rd_dom"/>
</dbReference>
<dbReference type="InterPro" id="IPR049083">
    <property type="entry name" value="TACO1_YebC_N"/>
</dbReference>
<dbReference type="InterPro" id="IPR002876">
    <property type="entry name" value="Transcrip_reg_TACO1-like"/>
</dbReference>
<dbReference type="InterPro" id="IPR026564">
    <property type="entry name" value="Transcrip_reg_TACO1-like_dom3"/>
</dbReference>
<dbReference type="InterPro" id="IPR026562">
    <property type="entry name" value="Transcrip_reg_TACO1_YeeN"/>
</dbReference>
<dbReference type="InterPro" id="IPR029072">
    <property type="entry name" value="YebC-like"/>
</dbReference>
<dbReference type="NCBIfam" id="NF001030">
    <property type="entry name" value="PRK00110.1"/>
    <property type="match status" value="1"/>
</dbReference>
<dbReference type="NCBIfam" id="NF009044">
    <property type="entry name" value="PRK12378.1"/>
    <property type="match status" value="1"/>
</dbReference>
<dbReference type="NCBIfam" id="TIGR01033">
    <property type="entry name" value="YebC/PmpR family DNA-binding transcriptional regulator"/>
    <property type="match status" value="1"/>
</dbReference>
<dbReference type="PANTHER" id="PTHR12532">
    <property type="entry name" value="TRANSLATIONAL ACTIVATOR OF CYTOCHROME C OXIDASE 1"/>
    <property type="match status" value="1"/>
</dbReference>
<dbReference type="PANTHER" id="PTHR12532:SF0">
    <property type="entry name" value="TRANSLATIONAL ACTIVATOR OF CYTOCHROME C OXIDASE 1"/>
    <property type="match status" value="1"/>
</dbReference>
<dbReference type="Pfam" id="PF20772">
    <property type="entry name" value="TACO1_YebC_N"/>
    <property type="match status" value="1"/>
</dbReference>
<dbReference type="Pfam" id="PF01709">
    <property type="entry name" value="Transcrip_reg"/>
    <property type="match status" value="1"/>
</dbReference>
<dbReference type="SUPFAM" id="SSF75625">
    <property type="entry name" value="YebC-like"/>
    <property type="match status" value="1"/>
</dbReference>
<protein>
    <recommendedName>
        <fullName evidence="1">Probable transcriptional regulatory protein BCAH187_A0615</fullName>
    </recommendedName>
</protein>